<dbReference type="EC" id="3.2.1.20"/>
<dbReference type="EC" id="3.2.1.21"/>
<dbReference type="EMBL" id="DS499594">
    <property type="protein sequence ID" value="EDP56838.1"/>
    <property type="molecule type" value="Genomic_DNA"/>
</dbReference>
<dbReference type="SMR" id="B0XNL6"/>
<dbReference type="GlyCosmos" id="B0XNL6">
    <property type="glycosylation" value="7 sites, No reported glycans"/>
</dbReference>
<dbReference type="EnsemblFungi" id="EDP56838">
    <property type="protein sequence ID" value="EDP56838"/>
    <property type="gene ID" value="AFUB_015590"/>
</dbReference>
<dbReference type="VEuPathDB" id="FungiDB:AFUB_015590"/>
<dbReference type="HOGENOM" id="CLU_000631_11_0_1"/>
<dbReference type="OrthoDB" id="40153at5052"/>
<dbReference type="PhylomeDB" id="B0XNL6"/>
<dbReference type="Proteomes" id="UP000001699">
    <property type="component" value="Unassembled WGS sequence"/>
</dbReference>
<dbReference type="GO" id="GO:0005576">
    <property type="term" value="C:extracellular region"/>
    <property type="evidence" value="ECO:0007669"/>
    <property type="project" value="UniProtKB-SubCell"/>
</dbReference>
<dbReference type="GO" id="GO:0004558">
    <property type="term" value="F:alpha-1,4-glucosidase activity"/>
    <property type="evidence" value="ECO:0007669"/>
    <property type="project" value="UniProtKB-EC"/>
</dbReference>
<dbReference type="GO" id="GO:0008422">
    <property type="term" value="F:beta-glucosidase activity"/>
    <property type="evidence" value="ECO:0007669"/>
    <property type="project" value="UniProtKB-EC"/>
</dbReference>
<dbReference type="GO" id="GO:0030246">
    <property type="term" value="F:carbohydrate binding"/>
    <property type="evidence" value="ECO:0007669"/>
    <property type="project" value="InterPro"/>
</dbReference>
<dbReference type="GO" id="GO:0071555">
    <property type="term" value="P:cell wall organization"/>
    <property type="evidence" value="ECO:0007669"/>
    <property type="project" value="UniProtKB-KW"/>
</dbReference>
<dbReference type="GO" id="GO:0000272">
    <property type="term" value="P:polysaccharide catabolic process"/>
    <property type="evidence" value="ECO:0007669"/>
    <property type="project" value="UniProtKB-KW"/>
</dbReference>
<dbReference type="CDD" id="cd06602">
    <property type="entry name" value="GH31_MGAM_SI_GAA"/>
    <property type="match status" value="1"/>
</dbReference>
<dbReference type="CDD" id="cd14752">
    <property type="entry name" value="GH31_N"/>
    <property type="match status" value="1"/>
</dbReference>
<dbReference type="Gene3D" id="3.20.20.80">
    <property type="entry name" value="Glycosidases"/>
    <property type="match status" value="1"/>
</dbReference>
<dbReference type="Gene3D" id="2.60.40.1760">
    <property type="entry name" value="glycosyl hydrolase (family 31)"/>
    <property type="match status" value="1"/>
</dbReference>
<dbReference type="Gene3D" id="2.60.40.1180">
    <property type="entry name" value="Golgi alpha-mannosidase II"/>
    <property type="match status" value="2"/>
</dbReference>
<dbReference type="InterPro" id="IPR011013">
    <property type="entry name" value="Gal_mutarotase_sf_dom"/>
</dbReference>
<dbReference type="InterPro" id="IPR030458">
    <property type="entry name" value="Glyco_hydro_31_AS"/>
</dbReference>
<dbReference type="InterPro" id="IPR048395">
    <property type="entry name" value="Glyco_hydro_31_C"/>
</dbReference>
<dbReference type="InterPro" id="IPR025887">
    <property type="entry name" value="Glyco_hydro_31_N_dom"/>
</dbReference>
<dbReference type="InterPro" id="IPR000322">
    <property type="entry name" value="Glyco_hydro_31_TIM"/>
</dbReference>
<dbReference type="InterPro" id="IPR013780">
    <property type="entry name" value="Glyco_hydro_b"/>
</dbReference>
<dbReference type="InterPro" id="IPR017853">
    <property type="entry name" value="Glycoside_hydrolase_SF"/>
</dbReference>
<dbReference type="PANTHER" id="PTHR22762">
    <property type="entry name" value="ALPHA-GLUCOSIDASE"/>
    <property type="match status" value="1"/>
</dbReference>
<dbReference type="PANTHER" id="PTHR22762:SF67">
    <property type="entry name" value="ALPHA_BETA-GLUCOSIDASE AGDC-RELATED"/>
    <property type="match status" value="1"/>
</dbReference>
<dbReference type="Pfam" id="PF13802">
    <property type="entry name" value="Gal_mutarotas_2"/>
    <property type="match status" value="1"/>
</dbReference>
<dbReference type="Pfam" id="PF01055">
    <property type="entry name" value="Glyco_hydro_31_2nd"/>
    <property type="match status" value="1"/>
</dbReference>
<dbReference type="Pfam" id="PF21365">
    <property type="entry name" value="Glyco_hydro_31_3rd"/>
    <property type="match status" value="1"/>
</dbReference>
<dbReference type="SUPFAM" id="SSF51445">
    <property type="entry name" value="(Trans)glycosidases"/>
    <property type="match status" value="1"/>
</dbReference>
<dbReference type="SUPFAM" id="SSF74650">
    <property type="entry name" value="Galactose mutarotase-like"/>
    <property type="match status" value="1"/>
</dbReference>
<dbReference type="SUPFAM" id="SSF51011">
    <property type="entry name" value="Glycosyl hydrolase domain"/>
    <property type="match status" value="1"/>
</dbReference>
<dbReference type="PROSITE" id="PS00129">
    <property type="entry name" value="GLYCOSYL_HYDROL_F31_1"/>
    <property type="match status" value="1"/>
</dbReference>
<organism>
    <name type="scientific">Aspergillus fumigatus (strain CBS 144.89 / FGSC A1163 / CEA10)</name>
    <name type="common">Neosartorya fumigata</name>
    <dbReference type="NCBI Taxonomy" id="451804"/>
    <lineage>
        <taxon>Eukaryota</taxon>
        <taxon>Fungi</taxon>
        <taxon>Dikarya</taxon>
        <taxon>Ascomycota</taxon>
        <taxon>Pezizomycotina</taxon>
        <taxon>Eurotiomycetes</taxon>
        <taxon>Eurotiomycetidae</taxon>
        <taxon>Eurotiales</taxon>
        <taxon>Aspergillaceae</taxon>
        <taxon>Aspergillus</taxon>
        <taxon>Aspergillus subgen. Fumigati</taxon>
    </lineage>
</organism>
<proteinExistence type="inferred from homology"/>
<comment type="function">
    <text evidence="1">Glucosidase involved in the degradation of cellulosic biomass. Has both alpha- and beta-glucosidase activity (By similarity).</text>
</comment>
<comment type="catalytic activity">
    <reaction>
        <text>Hydrolysis of terminal, non-reducing (1-&gt;4)-linked alpha-D-glucose residues with release of alpha-D-glucose.</text>
        <dbReference type="EC" id="3.2.1.20"/>
    </reaction>
</comment>
<comment type="catalytic activity">
    <reaction>
        <text>Hydrolysis of terminal, non-reducing beta-D-glucosyl residues with release of beta-D-glucose.</text>
        <dbReference type="EC" id="3.2.1.21"/>
    </reaction>
</comment>
<comment type="subcellular location">
    <subcellularLocation>
        <location evidence="1">Secreted</location>
    </subcellularLocation>
</comment>
<comment type="similarity">
    <text evidence="5">Belongs to the glycosyl hydrolase 31 family.</text>
</comment>
<evidence type="ECO:0000250" key="1"/>
<evidence type="ECO:0000255" key="2"/>
<evidence type="ECO:0000255" key="3">
    <source>
        <dbReference type="PROSITE-ProRule" id="PRU10066"/>
    </source>
</evidence>
<evidence type="ECO:0000256" key="4">
    <source>
        <dbReference type="SAM" id="MobiDB-lite"/>
    </source>
</evidence>
<evidence type="ECO:0000305" key="5"/>
<gene>
    <name type="primary">agdC</name>
    <name type="ORF">AFUB_015590</name>
</gene>
<protein>
    <recommendedName>
        <fullName>Probable alpha/beta-glucosidase agdC</fullName>
        <ecNumber>3.2.1.20</ecNumber>
        <ecNumber>3.2.1.21</ecNumber>
    </recommendedName>
</protein>
<reference key="1">
    <citation type="journal article" date="2008" name="PLoS Genet.">
        <title>Genomic islands in the pathogenic filamentous fungus Aspergillus fumigatus.</title>
        <authorList>
            <person name="Fedorova N.D."/>
            <person name="Khaldi N."/>
            <person name="Joardar V.S."/>
            <person name="Maiti R."/>
            <person name="Amedeo P."/>
            <person name="Anderson M.J."/>
            <person name="Crabtree J."/>
            <person name="Silva J.C."/>
            <person name="Badger J.H."/>
            <person name="Albarraq A."/>
            <person name="Angiuoli S."/>
            <person name="Bussey H."/>
            <person name="Bowyer P."/>
            <person name="Cotty P.J."/>
            <person name="Dyer P.S."/>
            <person name="Egan A."/>
            <person name="Galens K."/>
            <person name="Fraser-Liggett C.M."/>
            <person name="Haas B.J."/>
            <person name="Inman J.M."/>
            <person name="Kent R."/>
            <person name="Lemieux S."/>
            <person name="Malavazi I."/>
            <person name="Orvis J."/>
            <person name="Roemer T."/>
            <person name="Ronning C.M."/>
            <person name="Sundaram J.P."/>
            <person name="Sutton G."/>
            <person name="Turner G."/>
            <person name="Venter J.C."/>
            <person name="White O.R."/>
            <person name="Whitty B.R."/>
            <person name="Youngman P."/>
            <person name="Wolfe K.H."/>
            <person name="Goldman G.H."/>
            <person name="Wortman J.R."/>
            <person name="Jiang B."/>
            <person name="Denning D.W."/>
            <person name="Nierman W.C."/>
        </authorList>
    </citation>
    <scope>NUCLEOTIDE SEQUENCE [LARGE SCALE GENOMIC DNA]</scope>
    <source>
        <strain>CBS 144.89 / FGSC A1163 / CEA10</strain>
    </source>
</reference>
<feature type="signal peptide" evidence="2">
    <location>
        <begin position="1"/>
        <end position="14"/>
    </location>
</feature>
<feature type="chain" id="PRO_0000394914" description="Probable alpha/beta-glucosidase agdC">
    <location>
        <begin position="15"/>
        <end position="881"/>
    </location>
</feature>
<feature type="region of interest" description="Disordered" evidence="4">
    <location>
        <begin position="440"/>
        <end position="485"/>
    </location>
</feature>
<feature type="compositionally biased region" description="Pro residues" evidence="4">
    <location>
        <begin position="448"/>
        <end position="463"/>
    </location>
</feature>
<feature type="active site" description="Nucleophile" evidence="3">
    <location>
        <position position="422"/>
    </location>
</feature>
<feature type="active site" evidence="1">
    <location>
        <position position="425"/>
    </location>
</feature>
<feature type="active site" description="Proton donor" evidence="1">
    <location>
        <position position="571"/>
    </location>
</feature>
<feature type="glycosylation site" description="N-linked (GlcNAc...) asparagine" evidence="2">
    <location>
        <position position="171"/>
    </location>
</feature>
<feature type="glycosylation site" description="N-linked (GlcNAc...) asparagine" evidence="2">
    <location>
        <position position="293"/>
    </location>
</feature>
<feature type="glycosylation site" description="N-linked (GlcNAc...) asparagine" evidence="2">
    <location>
        <position position="373"/>
    </location>
</feature>
<feature type="glycosylation site" description="N-linked (GlcNAc...) asparagine" evidence="2">
    <location>
        <position position="506"/>
    </location>
</feature>
<feature type="glycosylation site" description="N-linked (GlcNAc...) asparagine" evidence="2">
    <location>
        <position position="572"/>
    </location>
</feature>
<feature type="glycosylation site" description="N-linked (GlcNAc...) asparagine" evidence="2">
    <location>
        <position position="608"/>
    </location>
</feature>
<feature type="glycosylation site" description="N-linked (GlcNAc...) asparagine" evidence="2">
    <location>
        <position position="742"/>
    </location>
</feature>
<accession>B0XNL6</accession>
<sequence>MLRSLLLLAPLVGAAVIGARDHSQECPGYKATNIREGRDSLTADLTLAGKPCNTYGTDLKNLKLLVEYQTDKRLHVKIYDADEEVYQVPESVLPRVDGKGGSSKKSALKFDYQANPFSFKVKRGGEVLFDTSGSNLIFQSQYLSLRTWLPEDPNLYGLGEHTDSLRLETTNYTRTLWNRDAYAIPEKTNLYGTHPVYYDHRGQHGTHGVFLLNSNGMDIKIDKTKDGKQYLEYNTLGGVFDFYFFTGATPKDASIEYAKVVGLPAMQSYWTFGFHQCRYGYRDVFEVAEVVYNYSQAKIPLETMWTDIDYMDRRRVFTLDPERFPLEKMRELVSYLHNHNQHYIVMVDPAVSVSDNVGYNDGMEQGIFLQTQNGSLYKGAVWPGVTAYPDWFHPDIQKYWNDQFAKFFDPKTGVDIDGLWIDMNEAANFCPYPCSDPEGYARDNDLPPAAPPVRPSNPRPLPGFPGDFQPSSSSKRSTKGSKVGLPNRDLINPPYMIRNEAGSLSNKTINTDIIHAGEGYAEYDTHNLYGTMMSSASRNAMQHRRPGVRPLVITRSTYAGAGAHVGHWLGDNISEWSKYRISISQMLAFASMFQVPMIGSDVCGFGGNTTEELCARWARLGAFYTFFRNHNEITGIPQEFYRWPTVAESARKAIDIRYRLLDYIYTAFHRQTQTGEPFLQPMFYLYPKDKNTFSNQLQFFYGDAILVSPVTDGSQTSVDAYFPDDIFYDWHTGAALRGRGANVTLSNIDVTEIPIHIRGGSIIPVRSESAMTTTELRKKGFELIIAPGLDGTASGSLYLDDGDSIEPRATLELEFTYRKGHLQVKGKFGFRTEVKINAVTLLGQSAPASKSADVASLDSGRQAVTIKTSLDLTGPSEIDLS</sequence>
<keyword id="KW-0119">Carbohydrate metabolism</keyword>
<keyword id="KW-0961">Cell wall biogenesis/degradation</keyword>
<keyword id="KW-0325">Glycoprotein</keyword>
<keyword id="KW-0326">Glycosidase</keyword>
<keyword id="KW-0378">Hydrolase</keyword>
<keyword id="KW-0624">Polysaccharide degradation</keyword>
<keyword id="KW-0964">Secreted</keyword>
<keyword id="KW-0732">Signal</keyword>
<name>AGDC_ASPFC</name>